<proteinExistence type="evidence at protein level"/>
<comment type="function">
    <text evidence="1">Concentration-dependent partial inhibitor of Cav3.2/CACNA1H (IC(50)=1.18 uM) and Cav3.3/CACNA1I (IC(50)=0.49 uM) depolarized currents. In vivo, in a mouse model of post-surgical pain, it produces antiallodynia for both mechanical and thermal pain.</text>
</comment>
<comment type="subcellular location">
    <subcellularLocation>
        <location evidence="1">Secreted</location>
    </subcellularLocation>
</comment>
<comment type="tissue specificity">
    <text evidence="3">Expressed by the venom gland.</text>
</comment>
<comment type="mass spectrometry" mass="1195.4" method="Electrospray" evidence="1">
    <text>C-terminally amidated.</text>
</comment>
<comment type="miscellaneous">
    <text evidence="3">Pro-4 adopts a trans conformation.</text>
</comment>
<comment type="miscellaneous">
    <text evidence="1">Negative results: does not show activity on Cav3.1/CACNA1G, all Cav1.x and all Cav2.x calcium channels.</text>
</comment>
<sequence length="10" mass="1198">HCTPNSNHCW</sequence>
<name>TXO1A_HOTFR</name>
<reference key="1">
    <citation type="journal article" date="2024" name="Int. J. Mol. Sci.">
        <title>Novel scorpion toxin omega-buthitoxin-Hf1a selectively inhibits calcium influx via Cav3.3 and Cav3.2 and alleviates allodynia in a mouse model of acute postsurgical pain.</title>
        <authorList>
            <person name="Wang D."/>
            <person name="Herzig V."/>
            <person name="Dekan Z."/>
            <person name="Rosengren K.J."/>
            <person name="Payne C.D."/>
            <person name="Hasan M.M."/>
            <person name="Zhuang J."/>
            <person name="Bourinet E."/>
            <person name="Ragnarsson L."/>
            <person name="Alewood P.F."/>
            <person name="Lewis R.J."/>
        </authorList>
    </citation>
    <scope>PROTEIN SEQUENCE</scope>
    <scope>FUNCTION</scope>
    <scope>BIOASSAY</scope>
    <scope>SUBCELLULAR LOCATION</scope>
    <scope>SYNTHESIS OF AMIDATED AND FREE C-TERMINUS FORM</scope>
    <scope>MASS SPECTROMETRY</scope>
    <scope>AMIDATION AT TRP-10</scope>
    <scope>STRUCTURE BY NMR</scope>
    <scope>DISULFIDE BOND</scope>
    <source>
        <tissue>Venom</tissue>
    </source>
</reference>
<evidence type="ECO:0000269" key="1">
    <source>
    </source>
</evidence>
<evidence type="ECO:0000303" key="2">
    <source>
    </source>
</evidence>
<evidence type="ECO:0000305" key="3">
    <source>
    </source>
</evidence>
<dbReference type="PDB" id="9BFL">
    <property type="method" value="NMR"/>
    <property type="chains" value="A=1-10"/>
</dbReference>
<dbReference type="PDBsum" id="9BFL"/>
<dbReference type="GO" id="GO:0005576">
    <property type="term" value="C:extracellular region"/>
    <property type="evidence" value="ECO:0007669"/>
    <property type="project" value="UniProtKB-SubCell"/>
</dbReference>
<dbReference type="GO" id="GO:0005246">
    <property type="term" value="F:calcium channel regulator activity"/>
    <property type="evidence" value="ECO:0007669"/>
    <property type="project" value="UniProtKB-KW"/>
</dbReference>
<dbReference type="GO" id="GO:0090729">
    <property type="term" value="F:toxin activity"/>
    <property type="evidence" value="ECO:0007669"/>
    <property type="project" value="UniProtKB-KW"/>
</dbReference>
<keyword id="KW-0002">3D-structure</keyword>
<keyword id="KW-0027">Amidation</keyword>
<keyword id="KW-0108">Calcium channel impairing toxin</keyword>
<keyword id="KW-0903">Direct protein sequencing</keyword>
<keyword id="KW-1015">Disulfide bond</keyword>
<keyword id="KW-0872">Ion channel impairing toxin</keyword>
<keyword id="KW-0964">Secreted</keyword>
<keyword id="KW-0800">Toxin</keyword>
<keyword id="KW-1218">Voltage-gated calcium channel impairing toxin</keyword>
<protein>
    <recommendedName>
        <fullName evidence="2">Omega-buthitoxin-Hf1a</fullName>
        <shortName evidence="2">Omega-BUTX-Hf1a</shortName>
    </recommendedName>
</protein>
<organism>
    <name type="scientific">Hottentotta franzwerneri</name>
    <name type="common">Alligator backed scorpion</name>
    <name type="synonym">Buthus franzwerneri</name>
    <dbReference type="NCBI Taxonomy" id="1038076"/>
    <lineage>
        <taxon>Eukaryota</taxon>
        <taxon>Metazoa</taxon>
        <taxon>Ecdysozoa</taxon>
        <taxon>Arthropoda</taxon>
        <taxon>Chelicerata</taxon>
        <taxon>Arachnida</taxon>
        <taxon>Scorpiones</taxon>
        <taxon>Buthida</taxon>
        <taxon>Buthoidea</taxon>
        <taxon>Buthidae</taxon>
        <taxon>Hottentotta</taxon>
    </lineage>
</organism>
<feature type="peptide" id="PRO_0000461651" description="Omega-buthitoxin-Hf1a" evidence="1">
    <location>
        <begin position="1"/>
        <end position="10"/>
    </location>
</feature>
<feature type="modified residue" description="Tryptophan amide" evidence="1">
    <location>
        <position position="10"/>
    </location>
</feature>
<feature type="disulfide bond" evidence="1">
    <location>
        <begin position="2"/>
        <end position="9"/>
    </location>
</feature>
<accession>P0DXZ7</accession>